<keyword id="KW-0489">Methyltransferase</keyword>
<keyword id="KW-1185">Reference proteome</keyword>
<keyword id="KW-0949">S-adenosyl-L-methionine</keyword>
<keyword id="KW-0808">Transferase</keyword>
<gene>
    <name type="ordered locus">CE1797</name>
</gene>
<name>Y1797_COREF</name>
<dbReference type="EC" id="2.1.1.-"/>
<dbReference type="EMBL" id="BA000035">
    <property type="protein sequence ID" value="BAC18607.1"/>
    <property type="molecule type" value="Genomic_DNA"/>
</dbReference>
<dbReference type="RefSeq" id="WP_006767794.1">
    <property type="nucleotide sequence ID" value="NC_004369.1"/>
</dbReference>
<dbReference type="SMR" id="Q8FPI1"/>
<dbReference type="STRING" id="196164.gene:10742225"/>
<dbReference type="KEGG" id="cef:CE1797"/>
<dbReference type="eggNOG" id="COG2265">
    <property type="taxonomic scope" value="Bacteria"/>
</dbReference>
<dbReference type="HOGENOM" id="CLU_014689_7_0_11"/>
<dbReference type="OrthoDB" id="9804590at2"/>
<dbReference type="Proteomes" id="UP000001409">
    <property type="component" value="Chromosome"/>
</dbReference>
<dbReference type="GO" id="GO:0070041">
    <property type="term" value="F:rRNA (uridine-C5-)-methyltransferase activity"/>
    <property type="evidence" value="ECO:0007669"/>
    <property type="project" value="TreeGrafter"/>
</dbReference>
<dbReference type="GO" id="GO:0070475">
    <property type="term" value="P:rRNA base methylation"/>
    <property type="evidence" value="ECO:0007669"/>
    <property type="project" value="TreeGrafter"/>
</dbReference>
<dbReference type="CDD" id="cd02440">
    <property type="entry name" value="AdoMet_MTases"/>
    <property type="match status" value="1"/>
</dbReference>
<dbReference type="Gene3D" id="2.40.50.140">
    <property type="entry name" value="Nucleic acid-binding proteins"/>
    <property type="match status" value="1"/>
</dbReference>
<dbReference type="Gene3D" id="3.40.50.150">
    <property type="entry name" value="Vaccinia Virus protein VP39"/>
    <property type="match status" value="1"/>
</dbReference>
<dbReference type="InterPro" id="IPR030390">
    <property type="entry name" value="MeTrfase_TrmA_AS"/>
</dbReference>
<dbReference type="InterPro" id="IPR012340">
    <property type="entry name" value="NA-bd_OB-fold"/>
</dbReference>
<dbReference type="InterPro" id="IPR029063">
    <property type="entry name" value="SAM-dependent_MTases_sf"/>
</dbReference>
<dbReference type="InterPro" id="IPR002792">
    <property type="entry name" value="TRAM_dom"/>
</dbReference>
<dbReference type="InterPro" id="IPR010280">
    <property type="entry name" value="U5_MeTrfase_fam"/>
</dbReference>
<dbReference type="PANTHER" id="PTHR11061">
    <property type="entry name" value="RNA M5U METHYLTRANSFERASE"/>
    <property type="match status" value="1"/>
</dbReference>
<dbReference type="PANTHER" id="PTHR11061:SF30">
    <property type="entry name" value="TRNA (URACIL(54)-C(5))-METHYLTRANSFERASE"/>
    <property type="match status" value="1"/>
</dbReference>
<dbReference type="Pfam" id="PF01938">
    <property type="entry name" value="TRAM"/>
    <property type="match status" value="1"/>
</dbReference>
<dbReference type="Pfam" id="PF05958">
    <property type="entry name" value="tRNA_U5-meth_tr"/>
    <property type="match status" value="1"/>
</dbReference>
<dbReference type="SUPFAM" id="SSF50249">
    <property type="entry name" value="Nucleic acid-binding proteins"/>
    <property type="match status" value="1"/>
</dbReference>
<dbReference type="SUPFAM" id="SSF53335">
    <property type="entry name" value="S-adenosyl-L-methionine-dependent methyltransferases"/>
    <property type="match status" value="1"/>
</dbReference>
<dbReference type="PROSITE" id="PS51687">
    <property type="entry name" value="SAM_MT_RNA_M5U"/>
    <property type="match status" value="1"/>
</dbReference>
<dbReference type="PROSITE" id="PS50926">
    <property type="entry name" value="TRAM"/>
    <property type="match status" value="1"/>
</dbReference>
<dbReference type="PROSITE" id="PS01230">
    <property type="entry name" value="TRMA_1"/>
    <property type="match status" value="1"/>
</dbReference>
<reference key="1">
    <citation type="journal article" date="2003" name="Genome Res.">
        <title>Comparative complete genome sequence analysis of the amino acid replacements responsible for the thermostability of Corynebacterium efficiens.</title>
        <authorList>
            <person name="Nishio Y."/>
            <person name="Nakamura Y."/>
            <person name="Kawarabayasi Y."/>
            <person name="Usuda Y."/>
            <person name="Kimura E."/>
            <person name="Sugimoto S."/>
            <person name="Matsui K."/>
            <person name="Yamagishi A."/>
            <person name="Kikuchi H."/>
            <person name="Ikeo K."/>
            <person name="Gojobori T."/>
        </authorList>
    </citation>
    <scope>NUCLEOTIDE SEQUENCE [LARGE SCALE GENOMIC DNA]</scope>
    <source>
        <strain>DSM 44549 / YS-314 / AJ 12310 / JCM 11189 / NBRC 100395</strain>
    </source>
</reference>
<feature type="chain" id="PRO_0000161975" description="Uncharacterized RNA methyltransferase CE1797">
    <location>
        <begin position="1"/>
        <end position="421"/>
    </location>
</feature>
<feature type="domain" description="TRAM" evidence="1">
    <location>
        <begin position="14"/>
        <end position="72"/>
    </location>
</feature>
<feature type="active site" description="Nucleophile" evidence="2">
    <location>
        <position position="376"/>
    </location>
</feature>
<feature type="binding site" evidence="2">
    <location>
        <position position="250"/>
    </location>
    <ligand>
        <name>S-adenosyl-L-methionine</name>
        <dbReference type="ChEBI" id="CHEBI:59789"/>
    </ligand>
</feature>
<feature type="binding site" evidence="2">
    <location>
        <position position="286"/>
    </location>
    <ligand>
        <name>S-adenosyl-L-methionine</name>
        <dbReference type="ChEBI" id="CHEBI:59789"/>
    </ligand>
</feature>
<feature type="binding site" evidence="2">
    <location>
        <position position="308"/>
    </location>
    <ligand>
        <name>S-adenosyl-L-methionine</name>
        <dbReference type="ChEBI" id="CHEBI:59789"/>
    </ligand>
</feature>
<feature type="binding site" evidence="2">
    <location>
        <position position="349"/>
    </location>
    <ligand>
        <name>S-adenosyl-L-methionine</name>
        <dbReference type="ChEBI" id="CHEBI:59789"/>
    </ligand>
</feature>
<comment type="similarity">
    <text evidence="2">Belongs to the class I-like SAM-binding methyltransferase superfamily. RNA M5U methyltransferase family.</text>
</comment>
<accession>Q8FPI1</accession>
<organism>
    <name type="scientific">Corynebacterium efficiens (strain DSM 44549 / YS-314 / AJ 12310 / JCM 11189 / NBRC 100395)</name>
    <dbReference type="NCBI Taxonomy" id="196164"/>
    <lineage>
        <taxon>Bacteria</taxon>
        <taxon>Bacillati</taxon>
        <taxon>Actinomycetota</taxon>
        <taxon>Actinomycetes</taxon>
        <taxon>Mycobacteriales</taxon>
        <taxon>Corynebacteriaceae</taxon>
        <taxon>Corynebacterium</taxon>
    </lineage>
</organism>
<evidence type="ECO:0000255" key="1">
    <source>
        <dbReference type="PROSITE-ProRule" id="PRU00208"/>
    </source>
</evidence>
<evidence type="ECO:0000255" key="2">
    <source>
        <dbReference type="PROSITE-ProRule" id="PRU01024"/>
    </source>
</evidence>
<protein>
    <recommendedName>
        <fullName>Uncharacterized RNA methyltransferase CE1797</fullName>
        <ecNumber>2.1.1.-</ecNumber>
    </recommendedName>
</protein>
<proteinExistence type="inferred from homology"/>
<sequence>MSDTAELTTDPTPDLTKGDTITVEVTRPAHGGEGIAHHGGRVIFVRGGFPGDDVDVEITQVKKRFARGFVVQVNVASPHRVDSRCPAAAAGAGCCDYAELSPEAELEIKSRVLTDQLQRIGGLADIPTPELFELEPSQGWRTRVRLGVDASGRAGFRKLRSNDLVTDVACSQVVPELIDGLVGPGARTFTPDSEVIAAIDDRGVRTVVEVRKAPRGRRAETILHVLEGDGSVEQTVGDHTWTFPVSGFWQAHTKAPGAYSAFIGEVLDGAELVDVDKRGPVAWDLYGGVGLFVPVINRALGAHVHSVELSEGSAEAGDDALAGLPVTFHAGRVESVTSQLPKPHVVVLDPPRTGAGSDVVATIAGAKPQLVVHIGCDPATFARDVADWSAGGYTLDRLAVFNAFPATHHYETIGVFTRKSA</sequence>